<feature type="chain" id="PRO_0000080222" description="Chromodomain Y-like protein">
    <location>
        <begin position="1"/>
        <end position="593"/>
    </location>
</feature>
<feature type="domain" description="Chromo" evidence="3">
    <location>
        <begin position="56"/>
        <end position="116"/>
    </location>
</feature>
<feature type="region of interest" description="Disordered" evidence="4">
    <location>
        <begin position="1"/>
        <end position="30"/>
    </location>
</feature>
<feature type="region of interest" description="Interaction with EZH2" evidence="1">
    <location>
        <begin position="56"/>
        <end position="304"/>
    </location>
</feature>
<feature type="region of interest" description="Disordered" evidence="4">
    <location>
        <begin position="110"/>
        <end position="158"/>
    </location>
</feature>
<feature type="region of interest" description="Disordered" evidence="4">
    <location>
        <begin position="200"/>
        <end position="223"/>
    </location>
</feature>
<feature type="region of interest" description="Acetyl-CoA-binding domain" evidence="2">
    <location>
        <begin position="357"/>
        <end position="589"/>
    </location>
</feature>
<feature type="compositionally biased region" description="Polar residues" evidence="4">
    <location>
        <begin position="1"/>
        <end position="14"/>
    </location>
</feature>
<feature type="compositionally biased region" description="Low complexity" evidence="4">
    <location>
        <begin position="117"/>
        <end position="129"/>
    </location>
</feature>
<feature type="compositionally biased region" description="Polar residues" evidence="4">
    <location>
        <begin position="133"/>
        <end position="146"/>
    </location>
</feature>
<feature type="modified residue" description="Phosphoserine" evidence="21">
    <location>
        <position position="83"/>
    </location>
</feature>
<feature type="modified residue" description="N6,N6,N6-trimethyllysine; by EHMT2; alternate" evidence="1">
    <location>
        <position position="130"/>
    </location>
</feature>
<feature type="modified residue" description="N6,N6-dimethyllysine; by EHMT2; alternate" evidence="1">
    <location>
        <position position="130"/>
    </location>
</feature>
<feature type="modified residue" description="N6-methyllysine; by EHMT2; alternate" evidence="1">
    <location>
        <position position="130"/>
    </location>
</feature>
<feature type="modified residue" description="Phosphoserine" evidence="1">
    <location>
        <position position="165"/>
    </location>
</feature>
<feature type="modified residue" description="Phosphoserine" evidence="1">
    <location>
        <position position="196"/>
    </location>
</feature>
<feature type="modified residue" description="Phosphoserine" evidence="21">
    <location>
        <position position="211"/>
    </location>
</feature>
<feature type="splice variant" id="VSP_026385" description="In isoform 2." evidence="16 17">
    <location>
        <begin position="1"/>
        <end position="49"/>
    </location>
</feature>
<feature type="splice variant" id="VSP_026386" description="In isoform 2." evidence="16 17">
    <original>AIQDAETQ</original>
    <variation>MASEELYE</variation>
    <location>
        <begin position="50"/>
        <end position="57"/>
    </location>
</feature>
<feature type="mutagenesis site" description="Abolishes CoA-binding. No effect on transcriptional repressor activity." evidence="7">
    <original>S</original>
    <variation>A</variation>
    <location>
        <position position="516"/>
    </location>
</feature>
<feature type="mutagenesis site" description="Abolishes CoA-binding. No effect on transcriptional repressor activity." evidence="7">
    <original>RK</original>
    <variation>AA</variation>
    <location>
        <begin position="588"/>
        <end position="589"/>
    </location>
</feature>
<feature type="sequence conflict" description="In Ref. 2; BAE33739." evidence="18" ref="2">
    <original>M</original>
    <variation>I</variation>
    <location>
        <position position="489"/>
    </location>
</feature>
<protein>
    <recommendedName>
        <fullName evidence="15">Chromodomain Y-like protein</fullName>
        <shortName evidence="15">CDY-like</shortName>
    </recommendedName>
    <alternativeName>
        <fullName evidence="1">Crotonyl-CoA hydratase</fullName>
        <ecNumber evidence="1">4.2.1.-</ecNumber>
    </alternativeName>
    <alternativeName>
        <fullName evidence="18">Putative histone acetyltransferase Cdyl</fullName>
        <ecNumber evidence="19">2.3.1.48</ecNumber>
    </alternativeName>
</protein>
<gene>
    <name evidence="15 20" type="primary">Cdyl</name>
</gene>
<evidence type="ECO:0000250" key="1">
    <source>
        <dbReference type="UniProtKB" id="Q9Y232"/>
    </source>
</evidence>
<evidence type="ECO:0000255" key="2"/>
<evidence type="ECO:0000255" key="3">
    <source>
        <dbReference type="PROSITE-ProRule" id="PRU00053"/>
    </source>
</evidence>
<evidence type="ECO:0000256" key="4">
    <source>
        <dbReference type="SAM" id="MobiDB-lite"/>
    </source>
</evidence>
<evidence type="ECO:0000269" key="5">
    <source>
    </source>
</evidence>
<evidence type="ECO:0000269" key="6">
    <source>
    </source>
</evidence>
<evidence type="ECO:0000269" key="7">
    <source>
    </source>
</evidence>
<evidence type="ECO:0000269" key="8">
    <source>
    </source>
</evidence>
<evidence type="ECO:0000269" key="9">
    <source>
    </source>
</evidence>
<evidence type="ECO:0000269" key="10">
    <source>
    </source>
</evidence>
<evidence type="ECO:0000269" key="11">
    <source>
    </source>
</evidence>
<evidence type="ECO:0000269" key="12">
    <source>
    </source>
</evidence>
<evidence type="ECO:0000269" key="13">
    <source>
    </source>
</evidence>
<evidence type="ECO:0000269" key="14">
    <source>
    </source>
</evidence>
<evidence type="ECO:0000303" key="15">
    <source>
    </source>
</evidence>
<evidence type="ECO:0000303" key="16">
    <source>
    </source>
</evidence>
<evidence type="ECO:0000303" key="17">
    <source>
    </source>
</evidence>
<evidence type="ECO:0000305" key="18"/>
<evidence type="ECO:0000305" key="19">
    <source>
    </source>
</evidence>
<evidence type="ECO:0000312" key="20">
    <source>
        <dbReference type="MGI" id="MGI:1339956"/>
    </source>
</evidence>
<evidence type="ECO:0007744" key="21">
    <source>
    </source>
</evidence>
<comment type="function">
    <molecule>Isoform 2</molecule>
    <text evidence="1 6 7 8 10 11 12 14">Chromatin reader protein that recognizes and binds histone H3 trimethylated at 'Lys-9', dimethylated at 'Lys-27' and trimethylated at 'Lys-27' (H3K9me3, H3K27me2 and H3K27me3, respectively) (PubMed:12947414). Part of multimeric repressive chromatin complexes, where it is required for transmission and restoration of repressive histone marks, thereby preserving the epigenetic landscape (PubMed:12947414). Required for chromatin targeting and maximal enzymatic activity of Polycomb repressive complex 2 (PRC2); acts as a positive regulator of PRC2 activity by bridging the pre-existing histone H3K27me3 and newly recruited PRC2 on neighboring nucleosomes (By similarity). Acts as a corepressor for REST by facilitating histone-lysine N-methyltransferase EHMT2 recruitment and H3K9 dimethylation at REST target genes for repression (By similarity). Involved in X chromosome inactivation in females: recruited to Xist RNA-coated X chromosome and facilitates propagation of H3K9me2 by anchoring EHMT2 (PubMed:24144980). Promotes EZH2 accumulation and H3K27me3 methylation at DNA double strand breaks (DSBs), thereby facilitating transcriptional repression at sites of DNA damage and homology-directed repair of DSBs (By similarity). Required for neuronal migration during brain development by repressing expression of RHOA (PubMed:28076783). By repressing the expression of SCN8A, contributes to the inhibition of intrinsic neuronal excitability and epileptogenesis (PubMed:28842554). In addition to acting as a chromatin reader, acts as a hydro-lyase (By similarity). Shows crotonyl-coA hydratase activity by mediating the conversion of crotonyl-CoA ((2E)-butenoyl-CoA) to beta-hydroxybutyryl-CoA (3-hydroxybutanoyl-CoA), thereby acting as a negative regulator of histone crotonylation (By similarity). Histone crotonylation is required during spermatogenesis; down-regulation of histone crotonylation by CDYL regulates the reactivation of sex chromosome-linked genes in round spermatids and histone replacement in elongating spermatids (PubMed:28803779). By regulating histone crotonylation and trimethylation of H3K27, may be involved in stress-induced depression-like behaviors, possibly by regulating VGF expression (PubMed:30665597). May have histone acetyltransferase activity; such activity is however unsure in vivo (PubMed:12072557).</text>
</comment>
<comment type="function">
    <molecule>Isoform 1</molecule>
    <text evidence="1">Not able to recognize and bind histone H3K9me3, histone H3K27me2 and histone H3K27me3, due to the presence of a N-terminal extension that inactivates the chromo domain.</text>
</comment>
<comment type="catalytic activity">
    <reaction evidence="19">
        <text>L-lysyl-[protein] + acetyl-CoA = N(6)-acetyl-L-lysyl-[protein] + CoA + H(+)</text>
        <dbReference type="Rhea" id="RHEA:45948"/>
        <dbReference type="Rhea" id="RHEA-COMP:9752"/>
        <dbReference type="Rhea" id="RHEA-COMP:10731"/>
        <dbReference type="ChEBI" id="CHEBI:15378"/>
        <dbReference type="ChEBI" id="CHEBI:29969"/>
        <dbReference type="ChEBI" id="CHEBI:57287"/>
        <dbReference type="ChEBI" id="CHEBI:57288"/>
        <dbReference type="ChEBI" id="CHEBI:61930"/>
        <dbReference type="EC" id="2.3.1.48"/>
    </reaction>
</comment>
<comment type="catalytic activity">
    <reaction evidence="1">
        <text>3-hydroxybutanoyl-CoA = (2E)-butenoyl-CoA + H2O</text>
        <dbReference type="Rhea" id="RHEA:45584"/>
        <dbReference type="ChEBI" id="CHEBI:15377"/>
        <dbReference type="ChEBI" id="CHEBI:57332"/>
        <dbReference type="ChEBI" id="CHEBI:78611"/>
    </reaction>
</comment>
<comment type="subunit">
    <text evidence="1 7 9">Forms multimers and multimerization is required for stable binding to chromatin (By similarity). Interacts with HDAC1 and HDAC2 via its C-terminal acetyl-CoA-binding domain (PubMed:12947414). Interacts with EZH2, EED, SUZ12, REST, EHMT1 and EHMT2 (By similarity). Part of a complex containing at least CDYL, REST, WIZ, SETB1, EHMT1 and EHMT2 (By similarity). Part of a complex containing at least CDYL, MIER1, MIER2, HDAC1 and HDAC2 (By similarity). Interacts with CHAF1A and CHAF1B; bridging the CAF-1 complex to the MCM2-7 (MCM) complex (By similarity). Interacts with MCM3 and MCM5; bridging the CAF-1 complex to the MCM2-7 (MCM) complex (By similarity). Interacts with EHMT2 and PRDM9; interaction only takes place when PRDM9 is bound to hotspot DNA (PubMed:27932493).</text>
</comment>
<comment type="subcellular location">
    <molecule>Isoform 2</molecule>
    <subcellularLocation>
        <location evidence="6 7 8 13">Nucleus</location>
    </subcellularLocation>
    <subcellularLocation>
        <location evidence="7 8 13">Chromosome</location>
    </subcellularLocation>
    <text evidence="1 8 13">Recognizes and binds histone H3 trimethylated at 'Lys-9', dimethylated at 'Lys-27' and trimethylated at 'Lys-27' (H3K9me3, H3K27me2 and H3K27me3, respectively) on chromatin (PubMed:24144980). Multimerization is required for chromatin-binding (By similarity). Recruited to Xist RNA-coated X chromosome (PubMed:24144980). Recruited to sites of DNA double strand breaks in a PARP1-dependent fashion (PubMed:29177481).</text>
</comment>
<comment type="alternative products">
    <event type="alternative splicing"/>
    <isoform>
        <id>Q9WTK2-1</id>
        <name>1</name>
        <name evidence="1">a</name>
        <name evidence="1">CDYL1a</name>
        <sequence type="displayed"/>
    </isoform>
    <isoform>
        <id>Q9WTK2-2</id>
        <name>2</name>
        <name evidence="1">b</name>
        <name evidence="1">CDYL1b</name>
        <sequence type="described" ref="VSP_026385 VSP_026386"/>
    </isoform>
</comment>
<comment type="tissue specificity">
    <text evidence="5 12 14">Highly expressed in testis (at protein level) (PubMed:10192397). Expressed in the hippocampus (at protein level) (PubMed:28842554). Expressed in the medial prefrontal cortex, prelimbic cortex, intralimbic cortex and cingulate cortex area (at protein level) (PubMed:30665597). Isoform 1: Expressed as 2 transcripts encoding the same protein, a ubiquitous transcript and a highly expressed testis-specific transcript (PubMed:10192397).</text>
</comment>
<comment type="developmental stage">
    <text evidence="6 7">Highly expressed in elongating spermatids during histone hyperacetylation.</text>
</comment>
<comment type="induction">
    <text evidence="12 14">Down-regulated upon neuronal activity in the hippocampus (PubMed:28842554). Up-regulated after social defeat stress (PubMed:30665597).</text>
</comment>
<comment type="domain">
    <text evidence="1">The chromo domain recognizes and binds histone H3K9me3, histone H3K27me2 and histone H3K27me3.</text>
</comment>
<comment type="domain">
    <text evidence="1">The acetyl-CoA-binding domain mediates crotonyl-coA hydratase activity (By similarity). The acetyl-CoA-binding domain is required for recruitment to sites of DNA double strand breaks and for binding to poly (ADP ribose) moieties (By similarity).</text>
</comment>
<comment type="disruption phenotype">
    <text evidence="11">Mice show no overt differences in body weight, but males display a substantial decrease in the size and weight of the testis and show reduced fertility. Males show decreased epididymal sperm counts, sperm cell motility, and sperm velocity and a marked increase in cell apoptosis in the testis.</text>
</comment>
<comment type="miscellaneous">
    <text evidence="7">Interaction with HDAC1 or HDAC2 prevents coenzyme A binding.</text>
</comment>
<comment type="caution">
    <text evidence="1 6 7">Was initially reported to display histone acetyltransferase activity, with a preference for histone H4 (PubMed:12072557). Such activity is however unsure in vivo. Histone acetyltransferase activity would be in contradiction with the function of the protein in corepressor complexes (PubMed:12947414). Moreover, crystallographic studies in human demonstrated that it does not share any similarity with other acetyltransferases and instead forms a crotonase-like fold.</text>
</comment>
<proteinExistence type="evidence at protein level"/>
<sequence>MGIGNSQPNSQEAQLCTLPEKAEQPTDDNTCQQNNVVPATVSEPDQASPAIQDAETQVESIVDKRKNKKGKTEYLVRWKGYDSEDDTWEPEQHLVNCEEYIHDFNRRHNERQKEGSLARASRASPSNARKQISRSTHSTLSKTNSKALVVGKDHESKSSQLLAASQKFRKNPAPSLANRKNMDLAKSGIKILVPKSPVKGRTSVDGFQGESPEKLDPVDQGAEDTVAPEVTAEKPTGALLGPGAERARMGSRPRIHPLVPQVSGPVTAAMATGLAVNGKGTSPFMDALAANGTVTIQTSVTGVTAGKRKFIDDRRDQPFDKRLRFSVRQTESAYRYRDIVVRKQDGFTHILLSTKSSENNSLNPEVMKEVQSALSTAAADDSKLVLLSAVGSVFCCGLDFIYFIRRLTDDRKRESTKMADAIRNFVNTFIQFKKPIIVAVNGPAIGLGASILPLCDVVWANEKAWFQTPYTTFGQSPDGCSTVMFPKIMGGASANEMLFSGRKLTAQEACGKGLVSQVFWPGTFTQEVMVRIKELASCNPVVLEESKALVRCNMKMELEQANERECEVLKKIWGSAQGMDSMLKYLQRKIDEF</sequence>
<keyword id="KW-0012">Acyltransferase</keyword>
<keyword id="KW-0025">Alternative splicing</keyword>
<keyword id="KW-0158">Chromosome</keyword>
<keyword id="KW-0221">Differentiation</keyword>
<keyword id="KW-0456">Lyase</keyword>
<keyword id="KW-0488">Methylation</keyword>
<keyword id="KW-0539">Nucleus</keyword>
<keyword id="KW-0597">Phosphoprotein</keyword>
<keyword id="KW-1185">Reference proteome</keyword>
<keyword id="KW-0678">Repressor</keyword>
<keyword id="KW-0744">Spermatogenesis</keyword>
<keyword id="KW-0804">Transcription</keyword>
<keyword id="KW-0805">Transcription regulation</keyword>
<keyword id="KW-0808">Transferase</keyword>
<dbReference type="EC" id="4.2.1.-" evidence="1"/>
<dbReference type="EC" id="2.3.1.48" evidence="19"/>
<dbReference type="EMBL" id="AF081260">
    <property type="protein sequence ID" value="AAD22736.1"/>
    <property type="molecule type" value="mRNA"/>
</dbReference>
<dbReference type="EMBL" id="AF081261">
    <property type="protein sequence ID" value="AAD22737.1"/>
    <property type="molecule type" value="mRNA"/>
</dbReference>
<dbReference type="EMBL" id="AK156509">
    <property type="protein sequence ID" value="BAE33739.1"/>
    <property type="molecule type" value="mRNA"/>
</dbReference>
<dbReference type="EMBL" id="BC055103">
    <property type="protein sequence ID" value="AAH55103.1"/>
    <property type="molecule type" value="mRNA"/>
</dbReference>
<dbReference type="EMBL" id="BC062123">
    <property type="protein sequence ID" value="AAH62123.1"/>
    <property type="molecule type" value="mRNA"/>
</dbReference>
<dbReference type="CCDS" id="CCDS49235.1">
    <molecule id="Q9WTK2-1"/>
</dbReference>
<dbReference type="CCDS" id="CCDS49236.1">
    <molecule id="Q9WTK2-2"/>
</dbReference>
<dbReference type="RefSeq" id="NP_001116858.1">
    <molecule id="Q9WTK2-2"/>
    <property type="nucleotide sequence ID" value="NM_001123386.1"/>
</dbReference>
<dbReference type="RefSeq" id="NP_034011.1">
    <molecule id="Q9WTK2-1"/>
    <property type="nucleotide sequence ID" value="NM_009881.3"/>
</dbReference>
<dbReference type="SMR" id="Q9WTK2"/>
<dbReference type="BioGRID" id="198666">
    <property type="interactions" value="1"/>
</dbReference>
<dbReference type="FunCoup" id="Q9WTK2">
    <property type="interactions" value="3823"/>
</dbReference>
<dbReference type="STRING" id="10090.ENSMUSP00000074707"/>
<dbReference type="ChEMBL" id="CHEMBL4523497"/>
<dbReference type="GlyGen" id="Q9WTK2">
    <property type="glycosylation" value="1 site, 1 O-linked glycan (1 site)"/>
</dbReference>
<dbReference type="iPTMnet" id="Q9WTK2"/>
<dbReference type="PhosphoSitePlus" id="Q9WTK2"/>
<dbReference type="SwissPalm" id="Q9WTK2"/>
<dbReference type="jPOST" id="Q9WTK2"/>
<dbReference type="PaxDb" id="10090-ENSMUSP00000074707"/>
<dbReference type="PeptideAtlas" id="Q9WTK2"/>
<dbReference type="ProteomicsDB" id="283874">
    <molecule id="Q9WTK2-1"/>
</dbReference>
<dbReference type="ProteomicsDB" id="283875">
    <molecule id="Q9WTK2-2"/>
</dbReference>
<dbReference type="Antibodypedia" id="24514">
    <property type="antibodies" value="267 antibodies from 33 providers"/>
</dbReference>
<dbReference type="DNASU" id="12593"/>
<dbReference type="Ensembl" id="ENSMUST00000075220.14">
    <molecule id="Q9WTK2-1"/>
    <property type="protein sequence ID" value="ENSMUSP00000074707.7"/>
    <property type="gene ID" value="ENSMUSG00000059288.15"/>
</dbReference>
<dbReference type="Ensembl" id="ENSMUST00000163595.3">
    <molecule id="Q9WTK2-2"/>
    <property type="protein sequence ID" value="ENSMUSP00000131784.3"/>
    <property type="gene ID" value="ENSMUSG00000059288.15"/>
</dbReference>
<dbReference type="GeneID" id="12593"/>
<dbReference type="KEGG" id="mmu:12593"/>
<dbReference type="UCSC" id="uc007qce.2">
    <molecule id="Q9WTK2-1"/>
    <property type="organism name" value="mouse"/>
</dbReference>
<dbReference type="UCSC" id="uc007qcg.2">
    <molecule id="Q9WTK2-2"/>
    <property type="organism name" value="mouse"/>
</dbReference>
<dbReference type="AGR" id="MGI:1339956"/>
<dbReference type="CTD" id="9425"/>
<dbReference type="MGI" id="MGI:1339956">
    <property type="gene designation" value="Cdyl"/>
</dbReference>
<dbReference type="VEuPathDB" id="HostDB:ENSMUSG00000059288"/>
<dbReference type="eggNOG" id="KOG0016">
    <property type="taxonomic scope" value="Eukaryota"/>
</dbReference>
<dbReference type="eggNOG" id="KOG1911">
    <property type="taxonomic scope" value="Eukaryota"/>
</dbReference>
<dbReference type="GeneTree" id="ENSGT00940000155106"/>
<dbReference type="HOGENOM" id="CLU_009834_24_0_1"/>
<dbReference type="InParanoid" id="Q9WTK2"/>
<dbReference type="OMA" id="VPRSPMN"/>
<dbReference type="OrthoDB" id="6357915at2759"/>
<dbReference type="PhylomeDB" id="Q9WTK2"/>
<dbReference type="TreeFam" id="TF313375"/>
<dbReference type="BRENDA" id="4.2.1.150">
    <property type="organism ID" value="3474"/>
</dbReference>
<dbReference type="BioGRID-ORCS" id="12593">
    <property type="hits" value="6 hits in 82 CRISPR screens"/>
</dbReference>
<dbReference type="ChiTaRS" id="Cdyl">
    <property type="organism name" value="mouse"/>
</dbReference>
<dbReference type="PRO" id="PR:Q9WTK2"/>
<dbReference type="Proteomes" id="UP000000589">
    <property type="component" value="Chromosome 13"/>
</dbReference>
<dbReference type="RNAct" id="Q9WTK2">
    <property type="molecule type" value="protein"/>
</dbReference>
<dbReference type="Bgee" id="ENSMUSG00000059288">
    <property type="expression patterns" value="Expressed in seminiferous tubule of testis and 249 other cell types or tissues"/>
</dbReference>
<dbReference type="ExpressionAtlas" id="Q9WTK2">
    <property type="expression patterns" value="baseline and differential"/>
</dbReference>
<dbReference type="GO" id="GO:0005694">
    <property type="term" value="C:chromosome"/>
    <property type="evidence" value="ECO:0000314"/>
    <property type="project" value="UniProtKB"/>
</dbReference>
<dbReference type="GO" id="GO:0005737">
    <property type="term" value="C:cytoplasm"/>
    <property type="evidence" value="ECO:0000314"/>
    <property type="project" value="UniProtKB"/>
</dbReference>
<dbReference type="GO" id="GO:0016607">
    <property type="term" value="C:nuclear speck"/>
    <property type="evidence" value="ECO:0007669"/>
    <property type="project" value="Ensembl"/>
</dbReference>
<dbReference type="GO" id="GO:0005634">
    <property type="term" value="C:nucleus"/>
    <property type="evidence" value="ECO:0000314"/>
    <property type="project" value="UniProtKB"/>
</dbReference>
<dbReference type="GO" id="GO:0003682">
    <property type="term" value="F:chromatin binding"/>
    <property type="evidence" value="ECO:0000314"/>
    <property type="project" value="UniProtKB"/>
</dbReference>
<dbReference type="GO" id="GO:0120092">
    <property type="term" value="F:crotonyl-CoA hydratase activity"/>
    <property type="evidence" value="ECO:0000250"/>
    <property type="project" value="UniProtKB"/>
</dbReference>
<dbReference type="GO" id="GO:0004402">
    <property type="term" value="F:histone acetyltransferase activity"/>
    <property type="evidence" value="ECO:0007669"/>
    <property type="project" value="UniProtKB-EC"/>
</dbReference>
<dbReference type="GO" id="GO:0003714">
    <property type="term" value="F:transcription corepressor activity"/>
    <property type="evidence" value="ECO:0000250"/>
    <property type="project" value="UniProtKB"/>
</dbReference>
<dbReference type="GO" id="GO:0120094">
    <property type="term" value="P:negative regulation of peptidyl-lysine crotonylation"/>
    <property type="evidence" value="ECO:0000314"/>
    <property type="project" value="UniProtKB"/>
</dbReference>
<dbReference type="GO" id="GO:0060816">
    <property type="term" value="P:random inactivation of X chromosome"/>
    <property type="evidence" value="ECO:0000314"/>
    <property type="project" value="UniProtKB"/>
</dbReference>
<dbReference type="GO" id="GO:0007286">
    <property type="term" value="P:spermatid development"/>
    <property type="evidence" value="ECO:0000315"/>
    <property type="project" value="UniProtKB"/>
</dbReference>
<dbReference type="CDD" id="cd18634">
    <property type="entry name" value="CD_CDY"/>
    <property type="match status" value="1"/>
</dbReference>
<dbReference type="CDD" id="cd06558">
    <property type="entry name" value="crotonase-like"/>
    <property type="match status" value="1"/>
</dbReference>
<dbReference type="FunFam" id="1.10.12.10:FF:000006">
    <property type="entry name" value="Chromodomain Y-like protein"/>
    <property type="match status" value="1"/>
</dbReference>
<dbReference type="FunFam" id="3.90.226.10:FF:000012">
    <property type="entry name" value="Chromodomain Y-like protein 2"/>
    <property type="match status" value="1"/>
</dbReference>
<dbReference type="Gene3D" id="2.40.50.40">
    <property type="match status" value="1"/>
</dbReference>
<dbReference type="Gene3D" id="3.90.226.10">
    <property type="entry name" value="2-enoyl-CoA Hydratase, Chain A, domain 1"/>
    <property type="match status" value="1"/>
</dbReference>
<dbReference type="Gene3D" id="1.10.12.10">
    <property type="entry name" value="Lyase 2-enoyl-coa Hydratase, Chain A, domain 2"/>
    <property type="match status" value="1"/>
</dbReference>
<dbReference type="InterPro" id="IPR016197">
    <property type="entry name" value="Chromo-like_dom_sf"/>
</dbReference>
<dbReference type="InterPro" id="IPR000953">
    <property type="entry name" value="Chromo/chromo_shadow_dom"/>
</dbReference>
<dbReference type="InterPro" id="IPR023780">
    <property type="entry name" value="Chromo_domain"/>
</dbReference>
<dbReference type="InterPro" id="IPR023779">
    <property type="entry name" value="Chromodomain_CS"/>
</dbReference>
<dbReference type="InterPro" id="IPR029045">
    <property type="entry name" value="ClpP/crotonase-like_dom_sf"/>
</dbReference>
<dbReference type="InterPro" id="IPR051053">
    <property type="entry name" value="ECH/Chromodomain_protein"/>
</dbReference>
<dbReference type="InterPro" id="IPR001753">
    <property type="entry name" value="Enoyl-CoA_hydra/iso"/>
</dbReference>
<dbReference type="InterPro" id="IPR014748">
    <property type="entry name" value="Enoyl-CoA_hydra_C"/>
</dbReference>
<dbReference type="PANTHER" id="PTHR43684">
    <property type="match status" value="1"/>
</dbReference>
<dbReference type="PANTHER" id="PTHR43684:SF5">
    <property type="entry name" value="CHROMODOMAIN Y-LIKE PROTEIN"/>
    <property type="match status" value="1"/>
</dbReference>
<dbReference type="Pfam" id="PF00385">
    <property type="entry name" value="Chromo"/>
    <property type="match status" value="1"/>
</dbReference>
<dbReference type="Pfam" id="PF00378">
    <property type="entry name" value="ECH_1"/>
    <property type="match status" value="1"/>
</dbReference>
<dbReference type="SMART" id="SM00298">
    <property type="entry name" value="CHROMO"/>
    <property type="match status" value="1"/>
</dbReference>
<dbReference type="SUPFAM" id="SSF54160">
    <property type="entry name" value="Chromo domain-like"/>
    <property type="match status" value="1"/>
</dbReference>
<dbReference type="SUPFAM" id="SSF52096">
    <property type="entry name" value="ClpP/crotonase"/>
    <property type="match status" value="1"/>
</dbReference>
<dbReference type="PROSITE" id="PS00598">
    <property type="entry name" value="CHROMO_1"/>
    <property type="match status" value="1"/>
</dbReference>
<dbReference type="PROSITE" id="PS50013">
    <property type="entry name" value="CHROMO_2"/>
    <property type="match status" value="1"/>
</dbReference>
<accession>Q9WTK2</accession>
<accession>Q3U0W2</accession>
<accession>Q6P6N3</accession>
<organism>
    <name type="scientific">Mus musculus</name>
    <name type="common">Mouse</name>
    <dbReference type="NCBI Taxonomy" id="10090"/>
    <lineage>
        <taxon>Eukaryota</taxon>
        <taxon>Metazoa</taxon>
        <taxon>Chordata</taxon>
        <taxon>Craniata</taxon>
        <taxon>Vertebrata</taxon>
        <taxon>Euteleostomi</taxon>
        <taxon>Mammalia</taxon>
        <taxon>Eutheria</taxon>
        <taxon>Euarchontoglires</taxon>
        <taxon>Glires</taxon>
        <taxon>Rodentia</taxon>
        <taxon>Myomorpha</taxon>
        <taxon>Muroidea</taxon>
        <taxon>Muridae</taxon>
        <taxon>Murinae</taxon>
        <taxon>Mus</taxon>
        <taxon>Mus</taxon>
    </lineage>
</organism>
<reference key="1">
    <citation type="journal article" date="1999" name="Nat. Genet.">
        <title>Retroposition of autosomal mRNA yielded testis-specific gene family on human Y chromosome.</title>
        <authorList>
            <person name="Lahn B.T."/>
            <person name="Page D.C."/>
        </authorList>
    </citation>
    <scope>NUCLEOTIDE SEQUENCE [MRNA] (ISOFORM 1)</scope>
    <scope>TISSUE SPECIFICITY</scope>
    <source>
        <tissue>Testis</tissue>
    </source>
</reference>
<reference key="2">
    <citation type="journal article" date="2005" name="Science">
        <title>The transcriptional landscape of the mammalian genome.</title>
        <authorList>
            <person name="Carninci P."/>
            <person name="Kasukawa T."/>
            <person name="Katayama S."/>
            <person name="Gough J."/>
            <person name="Frith M.C."/>
            <person name="Maeda N."/>
            <person name="Oyama R."/>
            <person name="Ravasi T."/>
            <person name="Lenhard B."/>
            <person name="Wells C."/>
            <person name="Kodzius R."/>
            <person name="Shimokawa K."/>
            <person name="Bajic V.B."/>
            <person name="Brenner S.E."/>
            <person name="Batalov S."/>
            <person name="Forrest A.R."/>
            <person name="Zavolan M."/>
            <person name="Davis M.J."/>
            <person name="Wilming L.G."/>
            <person name="Aidinis V."/>
            <person name="Allen J.E."/>
            <person name="Ambesi-Impiombato A."/>
            <person name="Apweiler R."/>
            <person name="Aturaliya R.N."/>
            <person name="Bailey T.L."/>
            <person name="Bansal M."/>
            <person name="Baxter L."/>
            <person name="Beisel K.W."/>
            <person name="Bersano T."/>
            <person name="Bono H."/>
            <person name="Chalk A.M."/>
            <person name="Chiu K.P."/>
            <person name="Choudhary V."/>
            <person name="Christoffels A."/>
            <person name="Clutterbuck D.R."/>
            <person name="Crowe M.L."/>
            <person name="Dalla E."/>
            <person name="Dalrymple B.P."/>
            <person name="de Bono B."/>
            <person name="Della Gatta G."/>
            <person name="di Bernardo D."/>
            <person name="Down T."/>
            <person name="Engstrom P."/>
            <person name="Fagiolini M."/>
            <person name="Faulkner G."/>
            <person name="Fletcher C.F."/>
            <person name="Fukushima T."/>
            <person name="Furuno M."/>
            <person name="Futaki S."/>
            <person name="Gariboldi M."/>
            <person name="Georgii-Hemming P."/>
            <person name="Gingeras T.R."/>
            <person name="Gojobori T."/>
            <person name="Green R.E."/>
            <person name="Gustincich S."/>
            <person name="Harbers M."/>
            <person name="Hayashi Y."/>
            <person name="Hensch T.K."/>
            <person name="Hirokawa N."/>
            <person name="Hill D."/>
            <person name="Huminiecki L."/>
            <person name="Iacono M."/>
            <person name="Ikeo K."/>
            <person name="Iwama A."/>
            <person name="Ishikawa T."/>
            <person name="Jakt M."/>
            <person name="Kanapin A."/>
            <person name="Katoh M."/>
            <person name="Kawasawa Y."/>
            <person name="Kelso J."/>
            <person name="Kitamura H."/>
            <person name="Kitano H."/>
            <person name="Kollias G."/>
            <person name="Krishnan S.P."/>
            <person name="Kruger A."/>
            <person name="Kummerfeld S.K."/>
            <person name="Kurochkin I.V."/>
            <person name="Lareau L.F."/>
            <person name="Lazarevic D."/>
            <person name="Lipovich L."/>
            <person name="Liu J."/>
            <person name="Liuni S."/>
            <person name="McWilliam S."/>
            <person name="Madan Babu M."/>
            <person name="Madera M."/>
            <person name="Marchionni L."/>
            <person name="Matsuda H."/>
            <person name="Matsuzawa S."/>
            <person name="Miki H."/>
            <person name="Mignone F."/>
            <person name="Miyake S."/>
            <person name="Morris K."/>
            <person name="Mottagui-Tabar S."/>
            <person name="Mulder N."/>
            <person name="Nakano N."/>
            <person name="Nakauchi H."/>
            <person name="Ng P."/>
            <person name="Nilsson R."/>
            <person name="Nishiguchi S."/>
            <person name="Nishikawa S."/>
            <person name="Nori F."/>
            <person name="Ohara O."/>
            <person name="Okazaki Y."/>
            <person name="Orlando V."/>
            <person name="Pang K.C."/>
            <person name="Pavan W.J."/>
            <person name="Pavesi G."/>
            <person name="Pesole G."/>
            <person name="Petrovsky N."/>
            <person name="Piazza S."/>
            <person name="Reed J."/>
            <person name="Reid J.F."/>
            <person name="Ring B.Z."/>
            <person name="Ringwald M."/>
            <person name="Rost B."/>
            <person name="Ruan Y."/>
            <person name="Salzberg S.L."/>
            <person name="Sandelin A."/>
            <person name="Schneider C."/>
            <person name="Schoenbach C."/>
            <person name="Sekiguchi K."/>
            <person name="Semple C.A."/>
            <person name="Seno S."/>
            <person name="Sessa L."/>
            <person name="Sheng Y."/>
            <person name="Shibata Y."/>
            <person name="Shimada H."/>
            <person name="Shimada K."/>
            <person name="Silva D."/>
            <person name="Sinclair B."/>
            <person name="Sperling S."/>
            <person name="Stupka E."/>
            <person name="Sugiura K."/>
            <person name="Sultana R."/>
            <person name="Takenaka Y."/>
            <person name="Taki K."/>
            <person name="Tammoja K."/>
            <person name="Tan S.L."/>
            <person name="Tang S."/>
            <person name="Taylor M.S."/>
            <person name="Tegner J."/>
            <person name="Teichmann S.A."/>
            <person name="Ueda H.R."/>
            <person name="van Nimwegen E."/>
            <person name="Verardo R."/>
            <person name="Wei C.L."/>
            <person name="Yagi K."/>
            <person name="Yamanishi H."/>
            <person name="Zabarovsky E."/>
            <person name="Zhu S."/>
            <person name="Zimmer A."/>
            <person name="Hide W."/>
            <person name="Bult C."/>
            <person name="Grimmond S.M."/>
            <person name="Teasdale R.D."/>
            <person name="Liu E.T."/>
            <person name="Brusic V."/>
            <person name="Quackenbush J."/>
            <person name="Wahlestedt C."/>
            <person name="Mattick J.S."/>
            <person name="Hume D.A."/>
            <person name="Kai C."/>
            <person name="Sasaki D."/>
            <person name="Tomaru Y."/>
            <person name="Fukuda S."/>
            <person name="Kanamori-Katayama M."/>
            <person name="Suzuki M."/>
            <person name="Aoki J."/>
            <person name="Arakawa T."/>
            <person name="Iida J."/>
            <person name="Imamura K."/>
            <person name="Itoh M."/>
            <person name="Kato T."/>
            <person name="Kawaji H."/>
            <person name="Kawagashira N."/>
            <person name="Kawashima T."/>
            <person name="Kojima M."/>
            <person name="Kondo S."/>
            <person name="Konno H."/>
            <person name="Nakano K."/>
            <person name="Ninomiya N."/>
            <person name="Nishio T."/>
            <person name="Okada M."/>
            <person name="Plessy C."/>
            <person name="Shibata K."/>
            <person name="Shiraki T."/>
            <person name="Suzuki S."/>
            <person name="Tagami M."/>
            <person name="Waki K."/>
            <person name="Watahiki A."/>
            <person name="Okamura-Oho Y."/>
            <person name="Suzuki H."/>
            <person name="Kawai J."/>
            <person name="Hayashizaki Y."/>
        </authorList>
    </citation>
    <scope>NUCLEOTIDE SEQUENCE [LARGE SCALE MRNA] (ISOFORM 2)</scope>
    <source>
        <strain>NOD</strain>
        <tissue>Spleen</tissue>
    </source>
</reference>
<reference key="3">
    <citation type="journal article" date="2004" name="Genome Res.">
        <title>The status, quality, and expansion of the NIH full-length cDNA project: the Mammalian Gene Collection (MGC).</title>
        <authorList>
            <consortium name="The MGC Project Team"/>
        </authorList>
    </citation>
    <scope>NUCLEOTIDE SEQUENCE [LARGE SCALE MRNA] (ISOFORMS 1 AND 2)</scope>
    <source>
        <tissue>Testis</tissue>
    </source>
</reference>
<reference key="4">
    <citation type="journal article" date="2002" name="Proc. Natl. Acad. Sci. U.S.A.">
        <title>Previously uncharacterized histone acetyltransferases implicated in mammalian spermatogenesis.</title>
        <authorList>
            <person name="Lahn B.T."/>
            <person name="Tang Z.L."/>
            <person name="Zhou J."/>
            <person name="Barndt R.J."/>
            <person name="Parvinen M."/>
            <person name="Allis C.D."/>
            <person name="Page D.C."/>
        </authorList>
    </citation>
    <scope>FUNCTION</scope>
    <scope>CATALYTIC ACTIVITY</scope>
    <scope>SUBCELLULAR LOCATION</scope>
    <scope>DEVELOPMENTAL STAGE</scope>
    <scope>ALTERNATIVE SPLICING</scope>
</reference>
<reference key="5">
    <citation type="journal article" date="2003" name="EMBO Rep.">
        <title>Cdyl: a new transcriptional co-repressor.</title>
        <authorList>
            <person name="Caron C."/>
            <person name="Pivot-Pajot C."/>
            <person name="van Grunsven L.A."/>
            <person name="Col E."/>
            <person name="Lestrat C."/>
            <person name="Rousseaux S."/>
            <person name="Khochbin S."/>
        </authorList>
    </citation>
    <scope>FUNCTION</scope>
    <scope>SUBCELLULAR LOCATION</scope>
    <scope>DEVELOPMENTAL STAGE</scope>
    <scope>INTERACTION WITH HDAC1 AND HDAC2</scope>
    <scope>MUTAGENESIS OF SER-516 AND 588-ARG-LYS-589</scope>
</reference>
<reference key="6">
    <citation type="journal article" date="2010" name="Cell">
        <title>A tissue-specific atlas of mouse protein phosphorylation and expression.</title>
        <authorList>
            <person name="Huttlin E.L."/>
            <person name="Jedrychowski M.P."/>
            <person name="Elias J.E."/>
            <person name="Goswami T."/>
            <person name="Rad R."/>
            <person name="Beausoleil S.A."/>
            <person name="Villen J."/>
            <person name="Haas W."/>
            <person name="Sowa M.E."/>
            <person name="Gygi S.P."/>
        </authorList>
    </citation>
    <scope>PHOSPHORYLATION [LARGE SCALE ANALYSIS] AT SER-83 AND SER-211</scope>
    <scope>IDENTIFICATION BY MASS SPECTROMETRY [LARGE SCALE ANALYSIS]</scope>
    <source>
        <tissue>Kidney</tissue>
        <tissue>Lung</tissue>
        <tissue>Spleen</tissue>
        <tissue>Testis</tissue>
    </source>
</reference>
<reference key="7">
    <citation type="journal article" date="2013" name="Mol. Cell. Biol.">
        <title>Cdyl, a new partner of the inactive X chromosome and potential reader of H3K27me3 and H3K9me2.</title>
        <authorList>
            <person name="Escamilla-Del-Arenal M."/>
            <person name="da Rocha S.T."/>
            <person name="Spruijt C.G."/>
            <person name="Masui O."/>
            <person name="Renaud O."/>
            <person name="Smits A.H."/>
            <person name="Margueron R."/>
            <person name="Vermeulen M."/>
            <person name="Heard E."/>
        </authorList>
    </citation>
    <scope>FUNCTION (ISOFORM 2)</scope>
    <scope>SUBCELLULAR LOCATION</scope>
</reference>
<reference key="8">
    <citation type="journal article" date="2017" name="Cell Rep.">
        <title>CDYL deficiency disrupts neuronal migration and increases susceptibility to epilepsy.</title>
        <authorList>
            <person name="Qin R."/>
            <person name="Cao S."/>
            <person name="Lyu T."/>
            <person name="Qi C."/>
            <person name="Zhang W."/>
            <person name="Wang Y."/>
        </authorList>
    </citation>
    <scope>FUNCTION</scope>
</reference>
<reference key="9">
    <citation type="journal article" date="2017" name="Mol. Biol. Cell">
        <title>PRDM9 interactions with other proteins provide a link between recombination hotspots and the chromosomal axis in meiosis.</title>
        <authorList>
            <person name="Parvanov E.D."/>
            <person name="Tian H."/>
            <person name="Billings T."/>
            <person name="Saxl R.L."/>
            <person name="Spruce C."/>
            <person name="Aithal R."/>
            <person name="Krejci L."/>
            <person name="Paigen K."/>
            <person name="Petkov P.M."/>
        </authorList>
    </citation>
    <scope>INTERACTION WITH PRDM9 AND EHMT2</scope>
</reference>
<reference key="10">
    <citation type="journal article" date="2017" name="Mol. Cell">
        <title>Chromodomain protein CDYL acts as a crotonyl-CoA hydratase to regulate histone crotonylation and spermatogenesis.</title>
        <authorList>
            <person name="Liu S."/>
            <person name="Yu H."/>
            <person name="Liu Y."/>
            <person name="Liu X."/>
            <person name="Zhang Y."/>
            <person name="Bu C."/>
            <person name="Yuan S."/>
            <person name="Chen Z."/>
            <person name="Xie G."/>
            <person name="Li W."/>
            <person name="Xu B."/>
            <person name="Yang J."/>
            <person name="He L."/>
            <person name="Jin T."/>
            <person name="Xiong Y."/>
            <person name="Sun L."/>
            <person name="Liu X."/>
            <person name="Han C."/>
            <person name="Cheng Z."/>
            <person name="Liang J."/>
            <person name="Shang Y."/>
        </authorList>
    </citation>
    <scope>FUNCTION (ISOFORM 2)</scope>
    <scope>SUBCELLULAR LOCATION</scope>
    <scope>DISRUPTION PHENOTYPE</scope>
</reference>
<reference key="11">
    <citation type="journal article" date="2017" name="Nat. Commun.">
        <title>CDYL suppresses epileptogenesis in mice through repression of axonal Nav1.6 sodium channel expression.</title>
        <authorList>
            <person name="Liu Y."/>
            <person name="Lai S."/>
            <person name="Ma W."/>
            <person name="Ke W."/>
            <person name="Zhang C."/>
            <person name="Liu S."/>
            <person name="Zhang Y."/>
            <person name="Pei F."/>
            <person name="Li S."/>
            <person name="Yi M."/>
            <person name="Shu Y."/>
            <person name="Shang Y."/>
            <person name="Liang J."/>
            <person name="Huang Z."/>
        </authorList>
    </citation>
    <scope>FUNCTION</scope>
    <scope>TISSUE SPECIFICITY</scope>
    <scope>REPRESSION BY NEURONAL ACTIVITY</scope>
</reference>
<reference key="12">
    <citation type="journal article" date="2018" name="J. Mol. Cell Biol.">
        <title>CDYL1 fosters double-strand break-induced transcription silencing and promotes homology-directed repair.</title>
        <authorList>
            <person name="Abu-Zhayia E.R."/>
            <person name="Awwad S.W."/>
            <person name="Ben-Oz B.M."/>
            <person name="Khoury-Haddad H."/>
            <person name="Ayoub N."/>
        </authorList>
    </citation>
    <scope>SUBCELLULAR LOCATION</scope>
</reference>
<reference key="13">
    <citation type="journal article" date="2019" name="Biol. Psychiatry">
        <title>Chromodomain Y-like Protein-Mediated Histone Crotonylation Regulates Stress-Induced Depressive Behaviors.</title>
        <authorList>
            <person name="Liu Y."/>
            <person name="Li M."/>
            <person name="Fan M."/>
            <person name="Song Y."/>
            <person name="Yu H."/>
            <person name="Zhi X."/>
            <person name="Xiao K."/>
            <person name="Lai S."/>
            <person name="Zhang J."/>
            <person name="Jin X."/>
            <person name="Shang Y."/>
            <person name="Liang J."/>
            <person name="Huang Z."/>
        </authorList>
    </citation>
    <scope>FUNCTION</scope>
    <scope>TISSUE SPECIFICITY</scope>
    <scope>INDUCTION BY SOCIAL DEFEAT STRESS</scope>
</reference>
<name>CDYL_MOUSE</name>